<sequence length="854" mass="98010">MGSLFRSETMCLAQLFLQSGTAYECLSVLGEKGLVEFRDLNQNVSSFQRKFVGEVKRCEELERILAYLVQEINRADIPLPEGDTSPPAPPLKQVLEMQEQLQKLEVELREVTKNKEKLRKNLLELIEYTHMLRVTKTFVKRNVEFEPTYEEFPPLENESLLDYSCMQRLGAKLGFVSGLINQGKVEAFEKMLWRVCKGYTIVTYAELDEPLEDPETGEVIKWYVFLISFWGEQIGHKVKKICDCYHCHVYPYPNTAEERREIQEGLNTRIQDLYTVLHKTEDYLRQVLCKAAESVYSRVIQVKKMKAIYHMLNMCSFDVTNKCLIAEVWCPEADLHELRRALEEGSRESGGTIPSFMNTIPTKETPPTLIRTNKFTEGFQNIVDAYGVGSYQEVNPALFTIITFPFLFAVMFGDFGHGFVMFLFALLLVLNENHPRLNQSQEIMRMFFNGRYILLLMGLFSVYTGLIYNDCFSKSVNLFGSRWNVSAMYSSSHSPEEQRKMVLWNDSIVRHHSVLQLDPSVPGVFRGPYPFGIDPIWNLATNRLTFLNSFKMKMSVILGITHMTFGVILGIFNHLHFRKKFNICLVSIPELLFMLCIFGYLIFMIIYKWLVYSAETSRTAPSILIEFISMFLFLASDTGGLYPGQEHVQRLLLLITVLSVPVLFLGKPLFLLWLHRGRSCFGVGRSGYTLVRKDSEEEVSLLGGQDIEEGNNQMEDGCREVTCEEFDFGEILMTQIIHSIEYCLGCISNTASYLRLWALSLAHAQLSEVLWAMLMHVGLRVDTAYGVLVLLPVIAFFAVLTIFILLIMEGLSAFLHAIRLHWVEFQNKFYVGAGTKFVPFSFRLLSSKFSDDLA</sequence>
<proteinExistence type="evidence at transcript level"/>
<evidence type="ECO:0000250" key="1"/>
<evidence type="ECO:0000250" key="2">
    <source>
        <dbReference type="UniProtKB" id="P15920"/>
    </source>
</evidence>
<evidence type="ECO:0000250" key="3">
    <source>
        <dbReference type="UniProtKB" id="Q29466"/>
    </source>
</evidence>
<evidence type="ECO:0000250" key="4">
    <source>
        <dbReference type="UniProtKB" id="Q9Y487"/>
    </source>
</evidence>
<evidence type="ECO:0000255" key="5"/>
<evidence type="ECO:0000305" key="6"/>
<gene>
    <name type="primary">ATP6V0A2</name>
    <name type="synonym">ATP6N1B</name>
</gene>
<name>VPP2_BOVIN</name>
<keyword id="KW-1003">Cell membrane</keyword>
<keyword id="KW-0967">Endosome</keyword>
<keyword id="KW-0375">Hydrogen ion transport</keyword>
<keyword id="KW-0406">Ion transport</keyword>
<keyword id="KW-0472">Membrane</keyword>
<keyword id="KW-0597">Phosphoprotein</keyword>
<keyword id="KW-1185">Reference proteome</keyword>
<keyword id="KW-0812">Transmembrane</keyword>
<keyword id="KW-1133">Transmembrane helix</keyword>
<keyword id="KW-0813">Transport</keyword>
<dbReference type="EMBL" id="AF105016">
    <property type="protein sequence ID" value="AAD12058.1"/>
    <property type="molecule type" value="mRNA"/>
</dbReference>
<dbReference type="RefSeq" id="NP_788810.1">
    <property type="nucleotide sequence ID" value="NM_176637.2"/>
</dbReference>
<dbReference type="SMR" id="O97681"/>
<dbReference type="FunCoup" id="O97681">
    <property type="interactions" value="2847"/>
</dbReference>
<dbReference type="STRING" id="9913.ENSBTAP00000009563"/>
<dbReference type="PaxDb" id="9913-ENSBTAP00000009563"/>
<dbReference type="Ensembl" id="ENSBTAT00000009563.4">
    <property type="protein sequence ID" value="ENSBTAP00000009563.3"/>
    <property type="gene ID" value="ENSBTAG00000016523.7"/>
</dbReference>
<dbReference type="GeneID" id="338038"/>
<dbReference type="KEGG" id="bta:338038"/>
<dbReference type="CTD" id="23545"/>
<dbReference type="VEuPathDB" id="HostDB:ENSBTAG00000007272"/>
<dbReference type="VGNC" id="VGNC:28123">
    <property type="gene designation" value="DNAH10"/>
</dbReference>
<dbReference type="eggNOG" id="KOG2189">
    <property type="taxonomic scope" value="Eukaryota"/>
</dbReference>
<dbReference type="GeneTree" id="ENSGT00940000154642"/>
<dbReference type="HOGENOM" id="CLU_005230_0_0_1"/>
<dbReference type="InParanoid" id="O97681"/>
<dbReference type="OMA" id="TYVQLYI"/>
<dbReference type="OrthoDB" id="10264220at2759"/>
<dbReference type="TreeFam" id="TF300346"/>
<dbReference type="Reactome" id="R-BTA-1222556">
    <property type="pathway name" value="ROS and RNS production in phagocytes"/>
</dbReference>
<dbReference type="Reactome" id="R-BTA-77387">
    <property type="pathway name" value="Insulin receptor recycling"/>
</dbReference>
<dbReference type="Reactome" id="R-BTA-917977">
    <property type="pathway name" value="Transferrin endocytosis and recycling"/>
</dbReference>
<dbReference type="Reactome" id="R-BTA-983712">
    <property type="pathway name" value="Ion channel transport"/>
</dbReference>
<dbReference type="Proteomes" id="UP000009136">
    <property type="component" value="Chromosome 17"/>
</dbReference>
<dbReference type="Bgee" id="ENSBTAG00000007272">
    <property type="expression patterns" value="Expressed in conceptus and 107 other cell types or tissues"/>
</dbReference>
<dbReference type="GO" id="GO:0001669">
    <property type="term" value="C:acrosomal vesicle"/>
    <property type="evidence" value="ECO:0000250"/>
    <property type="project" value="AgBase"/>
</dbReference>
<dbReference type="GO" id="GO:0010008">
    <property type="term" value="C:endosome membrane"/>
    <property type="evidence" value="ECO:0007669"/>
    <property type="project" value="UniProtKB-SubCell"/>
</dbReference>
<dbReference type="GO" id="GO:0005886">
    <property type="term" value="C:plasma membrane"/>
    <property type="evidence" value="ECO:0000318"/>
    <property type="project" value="GO_Central"/>
</dbReference>
<dbReference type="GO" id="GO:0016471">
    <property type="term" value="C:vacuolar proton-transporting V-type ATPase complex"/>
    <property type="evidence" value="ECO:0000318"/>
    <property type="project" value="GO_Central"/>
</dbReference>
<dbReference type="GO" id="GO:0000220">
    <property type="term" value="C:vacuolar proton-transporting V-type ATPase, V0 domain"/>
    <property type="evidence" value="ECO:0007669"/>
    <property type="project" value="InterPro"/>
</dbReference>
<dbReference type="GO" id="GO:0051117">
    <property type="term" value="F:ATPase binding"/>
    <property type="evidence" value="ECO:0000318"/>
    <property type="project" value="GO_Central"/>
</dbReference>
<dbReference type="GO" id="GO:0046961">
    <property type="term" value="F:proton-transporting ATPase activity, rotational mechanism"/>
    <property type="evidence" value="ECO:0007669"/>
    <property type="project" value="InterPro"/>
</dbReference>
<dbReference type="GO" id="GO:0036295">
    <property type="term" value="P:cellular response to increased oxygen levels"/>
    <property type="evidence" value="ECO:0000250"/>
    <property type="project" value="UniProtKB"/>
</dbReference>
<dbReference type="GO" id="GO:0006879">
    <property type="term" value="P:intracellular iron ion homeostasis"/>
    <property type="evidence" value="ECO:0000250"/>
    <property type="project" value="UniProtKB"/>
</dbReference>
<dbReference type="GO" id="GO:0007035">
    <property type="term" value="P:vacuolar acidification"/>
    <property type="evidence" value="ECO:0000318"/>
    <property type="project" value="GO_Central"/>
</dbReference>
<dbReference type="InterPro" id="IPR002490">
    <property type="entry name" value="V-ATPase_116kDa_su"/>
</dbReference>
<dbReference type="InterPro" id="IPR026028">
    <property type="entry name" value="V-type_ATPase_116kDa_su_euka"/>
</dbReference>
<dbReference type="PANTHER" id="PTHR11629:SF22">
    <property type="entry name" value="V-TYPE PROTON ATPASE 116 KDA SUBUNIT A 2"/>
    <property type="match status" value="1"/>
</dbReference>
<dbReference type="PANTHER" id="PTHR11629">
    <property type="entry name" value="VACUOLAR PROTON ATPASES"/>
    <property type="match status" value="1"/>
</dbReference>
<dbReference type="Pfam" id="PF01496">
    <property type="entry name" value="V_ATPase_I"/>
    <property type="match status" value="1"/>
</dbReference>
<dbReference type="PIRSF" id="PIRSF001293">
    <property type="entry name" value="ATP6V0A1"/>
    <property type="match status" value="1"/>
</dbReference>
<organism>
    <name type="scientific">Bos taurus</name>
    <name type="common">Bovine</name>
    <dbReference type="NCBI Taxonomy" id="9913"/>
    <lineage>
        <taxon>Eukaryota</taxon>
        <taxon>Metazoa</taxon>
        <taxon>Chordata</taxon>
        <taxon>Craniata</taxon>
        <taxon>Vertebrata</taxon>
        <taxon>Euteleostomi</taxon>
        <taxon>Mammalia</taxon>
        <taxon>Eutheria</taxon>
        <taxon>Laurasiatheria</taxon>
        <taxon>Artiodactyla</taxon>
        <taxon>Ruminantia</taxon>
        <taxon>Pecora</taxon>
        <taxon>Bovidae</taxon>
        <taxon>Bovinae</taxon>
        <taxon>Bos</taxon>
    </lineage>
</organism>
<protein>
    <recommendedName>
        <fullName>V-type proton ATPase 116 kDa subunit a 2</fullName>
        <shortName>V-ATPase 116 kDa subunit a 2</shortName>
    </recommendedName>
    <alternativeName>
        <fullName>Vacuolar proton translocating ATPase 116 kDa subunit a isoform 2</fullName>
    </alternativeName>
</protein>
<comment type="function">
    <text evidence="3 4">Subunit of the V0 complex of vacuolar(H+)-ATPase (V-ATPase), a multisubunit enzyme composed of a peripheral complex (V1) that hydrolyzes ATP and a membrane integral complex (V0) that translocates protons (By similarity). V-ATPase is responsible for acidifying and maintaining the pH of intracellular compartments and in some cell types, is targeted to the plasma membrane, where it is responsible for acidifying the extracellular environment (By similarity). Essential component of the endosomal pH-sensing machinery (By similarity). May play a role in maintaining the Golgi functions, such as glycosylation maturation, by controlling the Golgi pH (By similarity). In aerobic conditions, involved in intracellular iron homeostasis, thus triggering the activity of Fe(2+) prolyl hydroxylase (PHD) enzymes, and leading to HIF1A hydroxylation and subsequent proteasomal degradation (By similarity).</text>
</comment>
<comment type="subunit">
    <text evidence="3 4">V-ATPase is a heteromultimeric enzyme made up of two complexes: the ATP-hydrolytic V1 complex and the proton translocation V0 complex (By similarity). The V1 complex consists of three catalytic AB heterodimers that form a heterohexamer, three peripheral stalks each consisting of EG heterodimers, one central rotor including subunits D and F, and the regulatory subunits C and H (By similarity). The proton translocation complex V0 consists of the proton transport subunit a, a ring of proteolipid subunits c9c'', rotary subunit d, subunits e and f, and the accessory subunits ATP6AP1/Ac45 and ATP6AP2/PRR (By similarity). Directly interacts with PSCD2 through its N-terminal cytosolic tail in an intra-endosomal acidification-dependent manner (By similarity). Disruption of this interaction results in the inhibition of endocytosis (By similarity). Interacts with SPAAR (By similarity).</text>
</comment>
<comment type="subcellular location">
    <subcellularLocation>
        <location evidence="1">Cell membrane</location>
        <topology evidence="1">Multi-pass membrane protein</topology>
    </subcellularLocation>
    <subcellularLocation>
        <location evidence="1">Endosome membrane</location>
    </subcellularLocation>
</comment>
<comment type="tissue specificity">
    <text>Highly expressed in lung, kidney and spleen.</text>
</comment>
<comment type="similarity">
    <text evidence="6">Belongs to the V-ATPase 116 kDa subunit family.</text>
</comment>
<feature type="chain" id="PRO_0000119215" description="V-type proton ATPase 116 kDa subunit a 2">
    <location>
        <begin position="1"/>
        <end position="854"/>
    </location>
</feature>
<feature type="topological domain" description="Cytoplasmic" evidence="5">
    <location>
        <begin position="1"/>
        <end position="393"/>
    </location>
</feature>
<feature type="transmembrane region" description="Helical" evidence="5">
    <location>
        <begin position="394"/>
        <end position="412"/>
    </location>
</feature>
<feature type="topological domain" description="Vacuolar" evidence="5">
    <location>
        <begin position="413"/>
        <end position="414"/>
    </location>
</feature>
<feature type="transmembrane region" description="Helical" evidence="5">
    <location>
        <begin position="415"/>
        <end position="431"/>
    </location>
</feature>
<feature type="topological domain" description="Cytoplasmic" evidence="5">
    <location>
        <begin position="432"/>
        <end position="445"/>
    </location>
</feature>
<feature type="transmembrane region" description="Helical" evidence="5">
    <location>
        <begin position="446"/>
        <end position="475"/>
    </location>
</feature>
<feature type="topological domain" description="Vacuolar" evidence="5">
    <location>
        <begin position="476"/>
        <end position="549"/>
    </location>
</feature>
<feature type="transmembrane region" description="Helical" evidence="5">
    <location>
        <begin position="550"/>
        <end position="569"/>
    </location>
</feature>
<feature type="topological domain" description="Cytoplasmic" evidence="5">
    <location>
        <begin position="570"/>
        <end position="587"/>
    </location>
</feature>
<feature type="transmembrane region" description="Helical" evidence="5">
    <location>
        <begin position="588"/>
        <end position="608"/>
    </location>
</feature>
<feature type="topological domain" description="Vacuolar" evidence="5">
    <location>
        <begin position="609"/>
        <end position="651"/>
    </location>
</feature>
<feature type="transmembrane region" description="Helical" evidence="5">
    <location>
        <begin position="652"/>
        <end position="671"/>
    </location>
</feature>
<feature type="topological domain" description="Cytoplasmic" evidence="5">
    <location>
        <begin position="672"/>
        <end position="739"/>
    </location>
</feature>
<feature type="transmembrane region" description="Helical" evidence="5">
    <location>
        <begin position="740"/>
        <end position="764"/>
    </location>
</feature>
<feature type="topological domain" description="Vacuolar" evidence="5">
    <location>
        <begin position="765"/>
        <end position="785"/>
    </location>
</feature>
<feature type="transmembrane region" description="Helical" evidence="5">
    <location>
        <begin position="786"/>
        <end position="824"/>
    </location>
</feature>
<feature type="topological domain" description="Cytoplasmic" evidence="5">
    <location>
        <begin position="825"/>
        <end position="854"/>
    </location>
</feature>
<feature type="modified residue" description="Phosphoserine" evidence="4">
    <location>
        <position position="695"/>
    </location>
</feature>
<feature type="modified residue" description="Phosphoserine" evidence="2">
    <location>
        <position position="700"/>
    </location>
</feature>
<reference key="1">
    <citation type="journal article" date="1999" name="J. Biol. Chem.">
        <title>Identification and reconstitution of an isoform of the 116-kDa subunit of the vacuolar proton translocating ATPase.</title>
        <authorList>
            <person name="Peng S.-B."/>
            <person name="Li X."/>
            <person name="Crider B.P."/>
            <person name="Zhou Z."/>
            <person name="Andersen P."/>
            <person name="Tsai S.J."/>
            <person name="Xie X.-S."/>
            <person name="Stone D.K."/>
        </authorList>
    </citation>
    <scope>NUCLEOTIDE SEQUENCE [MRNA]</scope>
</reference>
<accession>O97681</accession>